<name>40G2_ORYSJ</name>
<proteinExistence type="evidence at transcript level"/>
<keyword id="KW-0025">Alternative splicing</keyword>
<keyword id="KW-0430">Lectin</keyword>
<keyword id="KW-1185">Reference proteome</keyword>
<sequence>MFGFGHHHNQAPAAPSDPNQIFKIFCRANENYCLTVRDSAVVLAPVNPKDEHQHWFKDMRFSTKVKDGEGMPAFALVNKATGLAVKHSLGQSHPVKLVPFNPEYEDASVLWTESKDVGKGFRCIRMVNNTRLNLDAFHGDKDHGGVRDGTTVVLWEWCKGDNQSWKILPWGPEAHSSSPGAATACTIGGVPVHTVRVFSAAGEDYCLTVRNGTACLAPKNPRDDYQHWIKDMRHSNKIRDEEGYPAFALVNKVTGEAIKHSTGQGHPVKLVPYNPEYQDESVLWTESKDVGKGFRCIRMVNNIYLNFDAFHGDKDHGGIHDGTEIVLWKWCEGDNQRWKILPW</sequence>
<comment type="function">
    <text evidence="1">Lectin which binds carbohydrates in vitro. Interacts through its lectin domain with glycan structures containing specific motifs.</text>
</comment>
<comment type="alternative products">
    <event type="alternative splicing"/>
    <isoform>
        <id>Q6Z4N6-1</id>
        <name>1</name>
        <sequence type="displayed"/>
    </isoform>
    <isoform>
        <id>Q6Z4N6-2</id>
        <name>2</name>
        <sequence type="described" ref="VSP_058658"/>
    </isoform>
</comment>
<comment type="domain">
    <text evidence="1">The ricin B-type lectin domain binds glycan structures.</text>
</comment>
<organism>
    <name type="scientific">Oryza sativa subsp. japonica</name>
    <name type="common">Rice</name>
    <dbReference type="NCBI Taxonomy" id="39947"/>
    <lineage>
        <taxon>Eukaryota</taxon>
        <taxon>Viridiplantae</taxon>
        <taxon>Streptophyta</taxon>
        <taxon>Embryophyta</taxon>
        <taxon>Tracheophyta</taxon>
        <taxon>Spermatophyta</taxon>
        <taxon>Magnoliopsida</taxon>
        <taxon>Liliopsida</taxon>
        <taxon>Poales</taxon>
        <taxon>Poaceae</taxon>
        <taxon>BOP clade</taxon>
        <taxon>Oryzoideae</taxon>
        <taxon>Oryzeae</taxon>
        <taxon>Oryzinae</taxon>
        <taxon>Oryza</taxon>
        <taxon>Oryza sativa</taxon>
    </lineage>
</organism>
<dbReference type="EMBL" id="Y08987">
    <property type="protein sequence ID" value="CAA70174.1"/>
    <property type="molecule type" value="mRNA"/>
</dbReference>
<dbReference type="EMBL" id="EU267979">
    <property type="protein sequence ID" value="ACA50501.1"/>
    <property type="molecule type" value="mRNA"/>
</dbReference>
<dbReference type="EMBL" id="KM051840">
    <property type="protein sequence ID" value="AIV98520.1"/>
    <property type="molecule type" value="mRNA"/>
</dbReference>
<dbReference type="EMBL" id="AP005167">
    <property type="protein sequence ID" value="BAC83804.1"/>
    <property type="molecule type" value="Genomic_DNA"/>
</dbReference>
<dbReference type="EMBL" id="AP005167">
    <property type="protein sequence ID" value="BAC83805.1"/>
    <property type="molecule type" value="Genomic_DNA"/>
</dbReference>
<dbReference type="EMBL" id="AP008213">
    <property type="protein sequence ID" value="BAF22581.1"/>
    <property type="molecule type" value="Genomic_DNA"/>
</dbReference>
<dbReference type="EMBL" id="AP014963">
    <property type="protein sequence ID" value="BAT03268.1"/>
    <property type="molecule type" value="Genomic_DNA"/>
</dbReference>
<dbReference type="EMBL" id="AK103324">
    <property type="protein sequence ID" value="BAG96018.1"/>
    <property type="molecule type" value="mRNA"/>
</dbReference>
<dbReference type="PIR" id="T03960">
    <property type="entry name" value="T03960"/>
</dbReference>
<dbReference type="SMR" id="Q6Z4N6"/>
<dbReference type="FunCoup" id="Q6Z4N6">
    <property type="interactions" value="2"/>
</dbReference>
<dbReference type="PaxDb" id="39947-Q6Z4N6"/>
<dbReference type="EnsemblPlants" id="Os07t0683900-01">
    <molecule id="Q6Z4N6-1"/>
    <property type="protein sequence ID" value="Os07t0683900-01"/>
    <property type="gene ID" value="Os07g0683900"/>
</dbReference>
<dbReference type="Gramene" id="Os07t0683900-01">
    <molecule id="Q6Z4N6-1"/>
    <property type="protein sequence ID" value="Os07t0683900-01"/>
    <property type="gene ID" value="Os07g0683900"/>
</dbReference>
<dbReference type="KEGG" id="dosa:Os07g0683900"/>
<dbReference type="eggNOG" id="ENOG502QTCR">
    <property type="taxonomic scope" value="Eukaryota"/>
</dbReference>
<dbReference type="InParanoid" id="Q6Z4N6"/>
<dbReference type="OMA" id="ILPWCKF"/>
<dbReference type="OrthoDB" id="7769065at2759"/>
<dbReference type="Proteomes" id="UP000000763">
    <property type="component" value="Chromosome 7"/>
</dbReference>
<dbReference type="Proteomes" id="UP000059680">
    <property type="component" value="Chromosome 7"/>
</dbReference>
<dbReference type="ExpressionAtlas" id="Q6Z4N6">
    <property type="expression patterns" value="baseline and differential"/>
</dbReference>
<dbReference type="GO" id="GO:0030246">
    <property type="term" value="F:carbohydrate binding"/>
    <property type="evidence" value="ECO:0007669"/>
    <property type="project" value="UniProtKB-KW"/>
</dbReference>
<dbReference type="CDD" id="cd23431">
    <property type="entry name" value="beta-trefoil_Ricin_AtEULS3-like"/>
    <property type="match status" value="2"/>
</dbReference>
<dbReference type="Gene3D" id="2.80.10.50">
    <property type="match status" value="2"/>
</dbReference>
<dbReference type="InterPro" id="IPR040249">
    <property type="entry name" value="Ricin_B-like_lectin_EULS3-like"/>
</dbReference>
<dbReference type="InterPro" id="IPR035992">
    <property type="entry name" value="Ricin_B-like_lectins"/>
</dbReference>
<dbReference type="PANTHER" id="PTHR31257">
    <property type="entry name" value="RICIN B-LIKE LECTIN EULS3"/>
    <property type="match status" value="1"/>
</dbReference>
<dbReference type="PANTHER" id="PTHR31257:SF7">
    <property type="entry name" value="RICIN B-LIKE LECTIN R40G2"/>
    <property type="match status" value="1"/>
</dbReference>
<dbReference type="SUPFAM" id="SSF50370">
    <property type="entry name" value="Ricin B-like lectins"/>
    <property type="match status" value="2"/>
</dbReference>
<protein>
    <recommendedName>
        <fullName evidence="4">Ricin B-like lectin R40G2</fullName>
    </recommendedName>
    <alternativeName>
        <fullName evidence="3">Osr40g2</fullName>
    </alternativeName>
</protein>
<evidence type="ECO:0000250" key="1">
    <source>
        <dbReference type="UniProtKB" id="Q945P1"/>
    </source>
</evidence>
<evidence type="ECO:0000255" key="2">
    <source>
        <dbReference type="PROSITE-ProRule" id="PRU00174"/>
    </source>
</evidence>
<evidence type="ECO:0000303" key="3">
    <source>
    </source>
</evidence>
<evidence type="ECO:0000305" key="4"/>
<evidence type="ECO:0000312" key="5">
    <source>
        <dbReference type="EMBL" id="BAC83804.1"/>
    </source>
</evidence>
<evidence type="ECO:0000312" key="6">
    <source>
        <dbReference type="EMBL" id="BAC83805.1"/>
    </source>
</evidence>
<evidence type="ECO:0000312" key="7">
    <source>
        <dbReference type="EMBL" id="BAF22581.1"/>
    </source>
</evidence>
<gene>
    <name evidence="4" type="primary">R40G2</name>
    <name evidence="7" type="ordered locus">Os07g0683900</name>
    <name evidence="4" type="ordered locus">LOC_Os07g48490</name>
    <name evidence="5" type="ORF">OSJNBa0060O17.13-1</name>
    <name evidence="6" type="ORF">OSJNBa0060O17.13-2</name>
</gene>
<reference key="1">
    <citation type="journal article" date="1997" name="Planta">
        <title>An abscisic-acid- and salt-stress-responsive rice cDNA from a novel plant gene family.</title>
        <authorList>
            <person name="Moons A."/>
            <person name="Gielen J."/>
            <person name="Vandekerckhove J."/>
            <person name="Van der Straeten D."/>
            <person name="Gheysen G."/>
            <person name="Van Montagu M."/>
        </authorList>
    </citation>
    <scope>NUCLEOTIDE SEQUENCE [MRNA]</scope>
</reference>
<reference key="2">
    <citation type="submission" date="2007-11" db="EMBL/GenBank/DDBJ databases">
        <title>Molecular cloning of the seed developmental stage gene(osr40g2) in rice.</title>
        <authorList>
            <person name="Yoon U.H."/>
            <person name="Kim Y.H."/>
        </authorList>
    </citation>
    <scope>NUCLEOTIDE SEQUENCE [MRNA]</scope>
    <source>
        <strain>cv. Ilpoombyeo</strain>
    </source>
</reference>
<reference key="3">
    <citation type="journal article" date="2005" name="Nature">
        <title>The map-based sequence of the rice genome.</title>
        <authorList>
            <consortium name="International rice genome sequencing project (IRGSP)"/>
        </authorList>
    </citation>
    <scope>NUCLEOTIDE SEQUENCE [LARGE SCALE GENOMIC DNA]</scope>
    <source>
        <strain>cv. Nipponbare</strain>
    </source>
</reference>
<reference key="4">
    <citation type="journal article" date="2008" name="Nucleic Acids Res.">
        <title>The rice annotation project database (RAP-DB): 2008 update.</title>
        <authorList>
            <consortium name="The rice annotation project (RAP)"/>
        </authorList>
    </citation>
    <scope>GENOME REANNOTATION</scope>
    <source>
        <strain>cv. Nipponbare</strain>
    </source>
</reference>
<reference key="5">
    <citation type="journal article" date="2013" name="Rice">
        <title>Improvement of the Oryza sativa Nipponbare reference genome using next generation sequence and optical map data.</title>
        <authorList>
            <person name="Kawahara Y."/>
            <person name="de la Bastide M."/>
            <person name="Hamilton J.P."/>
            <person name="Kanamori H."/>
            <person name="McCombie W.R."/>
            <person name="Ouyang S."/>
            <person name="Schwartz D.C."/>
            <person name="Tanaka T."/>
            <person name="Wu J."/>
            <person name="Zhou S."/>
            <person name="Childs K.L."/>
            <person name="Davidson R.M."/>
            <person name="Lin H."/>
            <person name="Quesada-Ocampo L."/>
            <person name="Vaillancourt B."/>
            <person name="Sakai H."/>
            <person name="Lee S.S."/>
            <person name="Kim J."/>
            <person name="Numa H."/>
            <person name="Itoh T."/>
            <person name="Buell C.R."/>
            <person name="Matsumoto T."/>
        </authorList>
    </citation>
    <scope>GENOME REANNOTATION</scope>
    <source>
        <strain>cv. Nipponbare</strain>
    </source>
</reference>
<reference key="6">
    <citation type="journal article" date="2003" name="Science">
        <title>Collection, mapping, and annotation of over 28,000 cDNA clones from japonica rice.</title>
        <authorList>
            <consortium name="The rice full-length cDNA consortium"/>
        </authorList>
    </citation>
    <scope>NUCLEOTIDE SEQUENCE [LARGE SCALE MRNA]</scope>
    <source>
        <strain>cv. Nipponbare</strain>
    </source>
</reference>
<accession>Q6Z4N6</accession>
<accession>O24212</accession>
<accession>Q6Z4N5</accession>
<feature type="chain" id="PRO_0000438378" description="Ricin B-like lectin R40G2">
    <location>
        <begin position="1"/>
        <end position="343"/>
    </location>
</feature>
<feature type="domain" description="Ricin B-type lectin" evidence="2">
    <location>
        <begin position="194"/>
        <end position="340"/>
    </location>
</feature>
<feature type="splice variant" id="VSP_058658" description="In isoform 2.">
    <location>
        <begin position="1"/>
        <end position="58"/>
    </location>
</feature>
<feature type="sequence conflict" description="In Ref. 1; CAA70174." evidence="4" ref="1">
    <original>A</original>
    <variation>P</variation>
    <location>
        <position position="200"/>
    </location>
</feature>
<feature type="sequence conflict" description="In Ref. 1; CAA70174." evidence="4" ref="1">
    <original>H</original>
    <variation>Y</variation>
    <location>
        <position position="227"/>
    </location>
</feature>
<feature type="sequence conflict" description="In Ref. 1; CAA70174." evidence="4" ref="1">
    <original>TESKD</original>
    <variation>RESKH</variation>
    <location>
        <begin position="285"/>
        <end position="289"/>
    </location>
</feature>